<organism>
    <name type="scientific">Dendroaspis polylepis polylepis</name>
    <name type="common">Black mamba</name>
    <dbReference type="NCBI Taxonomy" id="8620"/>
    <lineage>
        <taxon>Eukaryota</taxon>
        <taxon>Metazoa</taxon>
        <taxon>Chordata</taxon>
        <taxon>Craniata</taxon>
        <taxon>Vertebrata</taxon>
        <taxon>Euteleostomi</taxon>
        <taxon>Lepidosauria</taxon>
        <taxon>Squamata</taxon>
        <taxon>Bifurcata</taxon>
        <taxon>Unidentata</taxon>
        <taxon>Episquamata</taxon>
        <taxon>Toxicofera</taxon>
        <taxon>Serpentes</taxon>
        <taxon>Colubroidea</taxon>
        <taxon>Elapidae</taxon>
        <taxon>Elapinae</taxon>
        <taxon>Dendroaspis</taxon>
    </lineage>
</organism>
<protein>
    <recommendedName>
        <fullName>Acetylcholinesterase toxin C</fullName>
    </recommendedName>
    <alternativeName>
        <fullName>Fasciculin</fullName>
    </alternativeName>
</protein>
<feature type="chain" id="PRO_0000093656" description="Acetylcholinesterase toxin C" evidence="2">
    <location>
        <begin position="1"/>
        <end position="61"/>
    </location>
</feature>
<feature type="disulfide bond" evidence="1">
    <location>
        <begin position="3"/>
        <end position="22"/>
    </location>
</feature>
<feature type="disulfide bond" evidence="1">
    <location>
        <begin position="17"/>
        <end position="39"/>
    </location>
</feature>
<feature type="disulfide bond" evidence="1">
    <location>
        <begin position="41"/>
        <end position="52"/>
    </location>
</feature>
<feature type="disulfide bond" evidence="1">
    <location>
        <begin position="53"/>
        <end position="59"/>
    </location>
</feature>
<sequence length="61" mass="6817">TICYSHTTTSRAILKDCGENSCYRKSRRHPPKMVLGRGCGCPPGDDYLEVKCCTSPDKCNY</sequence>
<accession>P25681</accession>
<proteinExistence type="evidence at protein level"/>
<reference key="1">
    <citation type="journal article" date="1978" name="S. Afr. J. Chem.">
        <title>The complete primary structure of toxin C from Dendroaspis polylepis polylepis (black mamba) venom.</title>
        <authorList>
            <person name="Joubert F.J."/>
            <person name="Taljaard N."/>
        </authorList>
    </citation>
    <scope>PROTEIN SEQUENCE</scope>
    <scope>SUBCELLULAR LOCATION</scope>
    <scope>TOXIC DOSE</scope>
    <source>
        <tissue>Venom</tissue>
    </source>
</reference>
<name>3SEC_DENPO</name>
<evidence type="ECO:0000250" key="1">
    <source>
        <dbReference type="UniProtKB" id="P0C1Z0"/>
    </source>
</evidence>
<evidence type="ECO:0000269" key="2">
    <source ref="1"/>
</evidence>
<evidence type="ECO:0000305" key="3"/>
<keyword id="KW-0903">Direct protein sequencing</keyword>
<keyword id="KW-1015">Disulfide bond</keyword>
<keyword id="KW-0964">Secreted</keyword>
<keyword id="KW-0800">Toxin</keyword>
<dbReference type="SMR" id="P25681"/>
<dbReference type="GO" id="GO:0005576">
    <property type="term" value="C:extracellular region"/>
    <property type="evidence" value="ECO:0007669"/>
    <property type="project" value="UniProtKB-SubCell"/>
</dbReference>
<dbReference type="GO" id="GO:0090729">
    <property type="term" value="F:toxin activity"/>
    <property type="evidence" value="ECO:0007669"/>
    <property type="project" value="UniProtKB-KW"/>
</dbReference>
<dbReference type="CDD" id="cd00206">
    <property type="entry name" value="TFP_snake_toxin"/>
    <property type="match status" value="1"/>
</dbReference>
<dbReference type="Gene3D" id="2.10.60.10">
    <property type="entry name" value="CD59"/>
    <property type="match status" value="1"/>
</dbReference>
<dbReference type="InterPro" id="IPR003571">
    <property type="entry name" value="Snake_3FTx"/>
</dbReference>
<dbReference type="InterPro" id="IPR045860">
    <property type="entry name" value="Snake_toxin-like_sf"/>
</dbReference>
<dbReference type="InterPro" id="IPR018354">
    <property type="entry name" value="Snake_toxin_con_site"/>
</dbReference>
<dbReference type="InterPro" id="IPR054131">
    <property type="entry name" value="Toxin_cobra-type"/>
</dbReference>
<dbReference type="Pfam" id="PF21947">
    <property type="entry name" value="Toxin_cobra-type"/>
    <property type="match status" value="1"/>
</dbReference>
<dbReference type="SUPFAM" id="SSF57302">
    <property type="entry name" value="Snake toxin-like"/>
    <property type="match status" value="1"/>
</dbReference>
<dbReference type="PROSITE" id="PS00272">
    <property type="entry name" value="SNAKE_TOXIN"/>
    <property type="match status" value="1"/>
</dbReference>
<comment type="function">
    <text evidence="1">Inhibits acetylcholinesterase.</text>
</comment>
<comment type="subcellular location">
    <subcellularLocation>
        <location evidence="2">Secreted</location>
    </subcellularLocation>
</comment>
<comment type="tissue specificity">
    <text evidence="3">Expressed by the venom gland.</text>
</comment>
<comment type="toxic dose">
    <text evidence="2">LD(50) is 2.1 +/- 0.2 mg/kg by intravenous injection.</text>
</comment>
<comment type="similarity">
    <text evidence="3">Belongs to the three-finger toxin family. Short-chain subfamily. Acn-esterase inhibitor sub-subfamily.</text>
</comment>